<keyword id="KW-0342">GTP-binding</keyword>
<keyword id="KW-0449">Lipoprotein</keyword>
<keyword id="KW-0488">Methylation</keyword>
<keyword id="KW-0547">Nucleotide-binding</keyword>
<keyword id="KW-0636">Prenylation</keyword>
<keyword id="KW-1185">Reference proteome</keyword>
<keyword id="KW-0926">Vacuole</keyword>
<gene>
    <name evidence="5" type="primary">YPT7</name>
    <name type="ORF">MGG_08144</name>
</gene>
<name>YPT7_PYRO7</name>
<dbReference type="EMBL" id="CM001232">
    <property type="protein sequence ID" value="EHA55300.1"/>
    <property type="molecule type" value="Genomic_DNA"/>
</dbReference>
<dbReference type="RefSeq" id="XP_003715107.1">
    <property type="nucleotide sequence ID" value="XM_003715059.1"/>
</dbReference>
<dbReference type="SMR" id="G4MYS1"/>
<dbReference type="FunCoup" id="G4MYS1">
    <property type="interactions" value="915"/>
</dbReference>
<dbReference type="STRING" id="242507.G4MYS1"/>
<dbReference type="EnsemblFungi" id="MGG_08144T0">
    <property type="protein sequence ID" value="MGG_08144T0"/>
    <property type="gene ID" value="MGG_08144"/>
</dbReference>
<dbReference type="GeneID" id="2678359"/>
<dbReference type="KEGG" id="mgr:MGG_08144"/>
<dbReference type="VEuPathDB" id="FungiDB:MGG_08144"/>
<dbReference type="eggNOG" id="KOG0394">
    <property type="taxonomic scope" value="Eukaryota"/>
</dbReference>
<dbReference type="HOGENOM" id="CLU_041217_10_6_1"/>
<dbReference type="InParanoid" id="G4MYS1"/>
<dbReference type="OMA" id="TSWKDEF"/>
<dbReference type="OrthoDB" id="9989112at2759"/>
<dbReference type="PHI-base" id="PHI:11140"/>
<dbReference type="PHI-base" id="PHI:4736"/>
<dbReference type="Proteomes" id="UP000009058">
    <property type="component" value="Chromosome 2"/>
</dbReference>
<dbReference type="GO" id="GO:0000329">
    <property type="term" value="C:fungal-type vacuole membrane"/>
    <property type="evidence" value="ECO:0007669"/>
    <property type="project" value="TreeGrafter"/>
</dbReference>
<dbReference type="GO" id="GO:0005770">
    <property type="term" value="C:late endosome"/>
    <property type="evidence" value="ECO:0007669"/>
    <property type="project" value="TreeGrafter"/>
</dbReference>
<dbReference type="GO" id="GO:0005525">
    <property type="term" value="F:GTP binding"/>
    <property type="evidence" value="ECO:0007669"/>
    <property type="project" value="UniProtKB-KW"/>
</dbReference>
<dbReference type="GO" id="GO:0003924">
    <property type="term" value="F:GTPase activity"/>
    <property type="evidence" value="ECO:0007669"/>
    <property type="project" value="InterPro"/>
</dbReference>
<dbReference type="GO" id="GO:0032889">
    <property type="term" value="P:regulation of vacuole fusion, non-autophagic"/>
    <property type="evidence" value="ECO:0007669"/>
    <property type="project" value="TreeGrafter"/>
</dbReference>
<dbReference type="CDD" id="cd01862">
    <property type="entry name" value="Rab7"/>
    <property type="match status" value="1"/>
</dbReference>
<dbReference type="FunFam" id="3.40.50.300:FF:000086">
    <property type="entry name" value="Ras-related small GTPase"/>
    <property type="match status" value="1"/>
</dbReference>
<dbReference type="Gene3D" id="3.40.50.300">
    <property type="entry name" value="P-loop containing nucleotide triphosphate hydrolases"/>
    <property type="match status" value="1"/>
</dbReference>
<dbReference type="InterPro" id="IPR027417">
    <property type="entry name" value="P-loop_NTPase"/>
</dbReference>
<dbReference type="InterPro" id="IPR005225">
    <property type="entry name" value="Small_GTP-bd"/>
</dbReference>
<dbReference type="InterPro" id="IPR001806">
    <property type="entry name" value="Small_GTPase"/>
</dbReference>
<dbReference type="NCBIfam" id="TIGR00231">
    <property type="entry name" value="small_GTP"/>
    <property type="match status" value="1"/>
</dbReference>
<dbReference type="PANTHER" id="PTHR47981">
    <property type="entry name" value="RAB FAMILY"/>
    <property type="match status" value="1"/>
</dbReference>
<dbReference type="PANTHER" id="PTHR47981:SF20">
    <property type="entry name" value="RAS-RELATED PROTEIN RAB-7A"/>
    <property type="match status" value="1"/>
</dbReference>
<dbReference type="Pfam" id="PF00071">
    <property type="entry name" value="Ras"/>
    <property type="match status" value="1"/>
</dbReference>
<dbReference type="PRINTS" id="PR00449">
    <property type="entry name" value="RASTRNSFRMNG"/>
</dbReference>
<dbReference type="SMART" id="SM00175">
    <property type="entry name" value="RAB"/>
    <property type="match status" value="1"/>
</dbReference>
<dbReference type="SMART" id="SM00176">
    <property type="entry name" value="RAN"/>
    <property type="match status" value="1"/>
</dbReference>
<dbReference type="SMART" id="SM00173">
    <property type="entry name" value="RAS"/>
    <property type="match status" value="1"/>
</dbReference>
<dbReference type="SMART" id="SM00174">
    <property type="entry name" value="RHO"/>
    <property type="match status" value="1"/>
</dbReference>
<dbReference type="SUPFAM" id="SSF52540">
    <property type="entry name" value="P-loop containing nucleoside triphosphate hydrolases"/>
    <property type="match status" value="1"/>
</dbReference>
<dbReference type="PROSITE" id="PS51419">
    <property type="entry name" value="RAB"/>
    <property type="match status" value="1"/>
</dbReference>
<proteinExistence type="evidence at protein level"/>
<sequence>MSSRKKVLLKVIILGDSGVGKTSLMNQYVNKKFSASYKATIGADFLTREVLVDDRQVTMQLWDTAGQERFQSLGVAFYRGADCCVLVFDVNNSKSFDALDSWRDEFLIQASPRDPDNFPFVVLGNKIDVEESKRVISTKRAMTFCQSKGGIPYFETSAKEAINVEQAFEVIARNALAQEESEEFSGDFQDPINIHIDNDRDGCAC</sequence>
<organism>
    <name type="scientific">Pyricularia oryzae (strain 70-15 / ATCC MYA-4617 / FGSC 8958)</name>
    <name type="common">Rice blast fungus</name>
    <name type="synonym">Magnaporthe oryzae</name>
    <dbReference type="NCBI Taxonomy" id="242507"/>
    <lineage>
        <taxon>Eukaryota</taxon>
        <taxon>Fungi</taxon>
        <taxon>Dikarya</taxon>
        <taxon>Ascomycota</taxon>
        <taxon>Pezizomycotina</taxon>
        <taxon>Sordariomycetes</taxon>
        <taxon>Sordariomycetidae</taxon>
        <taxon>Magnaporthales</taxon>
        <taxon>Pyriculariaceae</taxon>
        <taxon>Pyricularia</taxon>
    </lineage>
</organism>
<accession>G4MYS1</accession>
<comment type="function">
    <text evidence="1 3">Ypt/Rab-type GTPases are key regulators of membrane trafficking and intracellular vesicular transport. They act as molecular switches that convert between GTP-bound and GDP-bound states, and regulate virtually all steps of membrane traffic from the formation of the transport vesicle at the donor membrane to its fusion at the target membrane. In the GDP-bound state, Ypt proteins are predominantly cytosolic, solubilized through the interaction with a GDP dissociation inhibitor (GDI). In the GTP-bound state, the proteins are membrane bound and interact with specific effector proteins that select cargo, promote vesicle movement, or verify the correct site of fusion (By similarity). Required for fungal morphogenesis, vacuole fusion, autophagy, stress resistance and pathogenicity (PubMed:25991510).</text>
</comment>
<comment type="activity regulation">
    <text evidence="1">Rab activation is generally mediated by a guanine exchange factor (GEF), while inactivation through hydrolysis of bound GTP is catalyzed by a GTPase activating protein (GAP).</text>
</comment>
<comment type="subunit">
    <text evidence="4">Interacts with the Rab GDP dissociation inhibitor GDI1.</text>
</comment>
<comment type="subcellular location">
    <subcellularLocation>
        <location evidence="3">Vacuole</location>
    </subcellularLocation>
</comment>
<comment type="disruption phenotype">
    <text evidence="3">Exhibits defects in mycelial growth and production of conidia, and consequently fails to cause disease in rice and barley. Shows impairment in autophagy, breached cell wall integrity, and higher sensitivity to both calcium and heavy metal stress.</text>
</comment>
<comment type="similarity">
    <text evidence="6">Belongs to the small GTPase superfamily. Rab family.</text>
</comment>
<evidence type="ECO:0000250" key="1">
    <source>
        <dbReference type="UniProtKB" id="P32939"/>
    </source>
</evidence>
<evidence type="ECO:0000250" key="2">
    <source>
        <dbReference type="UniProtKB" id="P36586"/>
    </source>
</evidence>
<evidence type="ECO:0000269" key="3">
    <source>
    </source>
</evidence>
<evidence type="ECO:0000269" key="4">
    <source>
    </source>
</evidence>
<evidence type="ECO:0000303" key="5">
    <source>
    </source>
</evidence>
<evidence type="ECO:0000305" key="6"/>
<reference key="1">
    <citation type="journal article" date="2005" name="Nature">
        <title>The genome sequence of the rice blast fungus Magnaporthe grisea.</title>
        <authorList>
            <person name="Dean R.A."/>
            <person name="Talbot N.J."/>
            <person name="Ebbole D.J."/>
            <person name="Farman M.L."/>
            <person name="Mitchell T.K."/>
            <person name="Orbach M.J."/>
            <person name="Thon M.R."/>
            <person name="Kulkarni R."/>
            <person name="Xu J.-R."/>
            <person name="Pan H."/>
            <person name="Read N.D."/>
            <person name="Lee Y.-H."/>
            <person name="Carbone I."/>
            <person name="Brown D."/>
            <person name="Oh Y.Y."/>
            <person name="Donofrio N."/>
            <person name="Jeong J.S."/>
            <person name="Soanes D.M."/>
            <person name="Djonovic S."/>
            <person name="Kolomiets E."/>
            <person name="Rehmeyer C."/>
            <person name="Li W."/>
            <person name="Harding M."/>
            <person name="Kim S."/>
            <person name="Lebrun M.-H."/>
            <person name="Bohnert H."/>
            <person name="Coughlan S."/>
            <person name="Butler J."/>
            <person name="Calvo S.E."/>
            <person name="Ma L.-J."/>
            <person name="Nicol R."/>
            <person name="Purcell S."/>
            <person name="Nusbaum C."/>
            <person name="Galagan J.E."/>
            <person name="Birren B.W."/>
        </authorList>
    </citation>
    <scope>NUCLEOTIDE SEQUENCE [LARGE SCALE GENOMIC DNA]</scope>
    <source>
        <strain>70-15 / ATCC MYA-4617 / FGSC 8958</strain>
    </source>
</reference>
<reference key="2">
    <citation type="journal article" date="2015" name="Environ. Microbiol.">
        <title>The small GTPase MoYpt7 is required for membrane fusion in autophagy and pathogenicity of Magnaporthe oryzae.</title>
        <authorList>
            <person name="Liu X.H."/>
            <person name="Chen S.M."/>
            <person name="Gao H.M."/>
            <person name="Ning G.A."/>
            <person name="Shi H.B."/>
            <person name="Wang Y."/>
            <person name="Dong B."/>
            <person name="Qi Y.Y."/>
            <person name="Zhang D.M."/>
            <person name="Lu G.D."/>
            <person name="Wang Z.H."/>
            <person name="Zhou J."/>
            <person name="Lin F.C."/>
        </authorList>
    </citation>
    <scope>FUNCTION</scope>
    <scope>SUBCELLULAR LOCATION</scope>
    <scope>DISRUPTION PHENOTYPE</scope>
    <scope>MUTAGENESIS OF GLN-67</scope>
</reference>
<reference key="3">
    <citation type="journal article" date="2018" name="J. Zhejiang Univ. Sci. B">
        <title>Physical interactions and mutational analysis of MoYpt7 in Magnaporthe oryzae.</title>
        <authorList>
            <person name="Huang L.Y."/>
            <person name="Wu M."/>
            <person name="Yu X.Y."/>
            <person name="Li L."/>
            <person name="Lin F.C."/>
            <person name="Liu X.H."/>
        </authorList>
    </citation>
    <scope>MUTAGENESIS OF ASN-125</scope>
    <scope>INTERACTION WITH GDI1</scope>
</reference>
<protein>
    <recommendedName>
        <fullName>Ypt/Rab-type GTPase ypt7</fullName>
    </recommendedName>
</protein>
<feature type="chain" id="PRO_0000451057" description="Ypt/Rab-type GTPase ypt7">
    <location>
        <begin position="1"/>
        <end position="205"/>
    </location>
</feature>
<feature type="short sequence motif" description="Effector region" evidence="1">
    <location>
        <begin position="37"/>
        <end position="45"/>
    </location>
</feature>
<feature type="binding site" evidence="1">
    <location>
        <begin position="17"/>
        <end position="23"/>
    </location>
    <ligand>
        <name>GTP</name>
        <dbReference type="ChEBI" id="CHEBI:37565"/>
    </ligand>
</feature>
<feature type="binding site" evidence="1">
    <location>
        <begin position="33"/>
        <end position="40"/>
    </location>
    <ligand>
        <name>GTP</name>
        <dbReference type="ChEBI" id="CHEBI:37565"/>
    </ligand>
</feature>
<feature type="binding site" evidence="1">
    <location>
        <position position="66"/>
    </location>
    <ligand>
        <name>GTP</name>
        <dbReference type="ChEBI" id="CHEBI:37565"/>
    </ligand>
</feature>
<feature type="binding site" evidence="1">
    <location>
        <begin position="125"/>
        <end position="128"/>
    </location>
    <ligand>
        <name>GTP</name>
        <dbReference type="ChEBI" id="CHEBI:37565"/>
    </ligand>
</feature>
<feature type="binding site" evidence="1">
    <location>
        <begin position="157"/>
        <end position="159"/>
    </location>
    <ligand>
        <name>GTP</name>
        <dbReference type="ChEBI" id="CHEBI:37565"/>
    </ligand>
</feature>
<feature type="modified residue" description="Cysteine methyl ester" evidence="2">
    <location>
        <position position="205"/>
    </location>
</feature>
<feature type="lipid moiety-binding region" description="S-geranylgeranyl cysteine" evidence="2">
    <location>
        <position position="203"/>
    </location>
</feature>
<feature type="lipid moiety-binding region" description="S-geranylgeranyl cysteine" evidence="2">
    <location>
        <position position="205"/>
    </location>
</feature>
<feature type="mutagenesis site" description="Constitutively in the GTP-bound conformation. Reduces pathogenicity and produces more appressoria-forming single-septum conidia." evidence="3">
    <original>Q</original>
    <variation>L</variation>
    <location>
        <position position="67"/>
    </location>
</feature>
<feature type="mutagenesis site" description="Constitutively in the GDP-bound conformation. Mislocalizes to the cytoplasm. Caused severe defects in conidiation and pathogenicity." evidence="4">
    <original>N</original>
    <variation>I</variation>
    <location>
        <position position="125"/>
    </location>
</feature>